<sequence>MAEISDLDRQIEQLRRCELIKESEVKALCAKAREILVEESNVQRVDSPVTVCGDIHGQFYDLKELFRVGGDVPETNYLFMGDFVDRGFYSVETFLLLLALKVRYPDRITLIRGNHESRQITQVYGFYDECLRKYGSVTVWRYCTEIFDYLSLSAIIDGKIFCVHGGLSPSIQTLDQIRTIDRKQEVPHDGPMCDLLWSDPEDTTGWGVSPRGAGYLFGSDVVAQFNAANDIDMICRAHQLVMEGYKWHFNETVLTVWSAPNYCYRCGNVAAILELDEHLQKDFIIFEAAPQETRGIPSKKPVADYFL</sequence>
<organism>
    <name type="scientific">Homo sapiens</name>
    <name type="common">Human</name>
    <dbReference type="NCBI Taxonomy" id="9606"/>
    <lineage>
        <taxon>Eukaryota</taxon>
        <taxon>Metazoa</taxon>
        <taxon>Chordata</taxon>
        <taxon>Craniata</taxon>
        <taxon>Vertebrata</taxon>
        <taxon>Euteleostomi</taxon>
        <taxon>Mammalia</taxon>
        <taxon>Eutheria</taxon>
        <taxon>Euarchontoglires</taxon>
        <taxon>Primates</taxon>
        <taxon>Haplorrhini</taxon>
        <taxon>Catarrhini</taxon>
        <taxon>Hominidae</taxon>
        <taxon>Homo</taxon>
    </lineage>
</organism>
<name>PP4C_HUMAN</name>
<feature type="initiator methionine" description="Removed" evidence="19 20 21">
    <location>
        <position position="1"/>
    </location>
</feature>
<feature type="chain" id="PRO_0000058883" description="Serine/threonine-protein phosphatase 4 catalytic subunit">
    <location>
        <begin position="2"/>
        <end position="307"/>
    </location>
</feature>
<feature type="active site" description="Proton donor" evidence="2">
    <location>
        <position position="115"/>
    </location>
</feature>
<feature type="binding site" evidence="3">
    <location>
        <position position="54"/>
    </location>
    <ligand>
        <name>Mn(2+)</name>
        <dbReference type="ChEBI" id="CHEBI:29035"/>
        <label>1</label>
    </ligand>
</feature>
<feature type="binding site" evidence="3">
    <location>
        <position position="56"/>
    </location>
    <ligand>
        <name>Mn(2+)</name>
        <dbReference type="ChEBI" id="CHEBI:29035"/>
        <label>1</label>
    </ligand>
</feature>
<feature type="binding site" evidence="3">
    <location>
        <position position="82"/>
    </location>
    <ligand>
        <name>Mn(2+)</name>
        <dbReference type="ChEBI" id="CHEBI:29035"/>
        <label>1</label>
    </ligand>
</feature>
<feature type="binding site" evidence="3">
    <location>
        <position position="82"/>
    </location>
    <ligand>
        <name>Mn(2+)</name>
        <dbReference type="ChEBI" id="CHEBI:29035"/>
        <label>2</label>
    </ligand>
</feature>
<feature type="binding site" evidence="3">
    <location>
        <position position="114"/>
    </location>
    <ligand>
        <name>Mn(2+)</name>
        <dbReference type="ChEBI" id="CHEBI:29035"/>
        <label>2</label>
    </ligand>
</feature>
<feature type="binding site" evidence="3">
    <location>
        <position position="164"/>
    </location>
    <ligand>
        <name>Mn(2+)</name>
        <dbReference type="ChEBI" id="CHEBI:29035"/>
        <label>2</label>
    </ligand>
</feature>
<feature type="binding site" evidence="3">
    <location>
        <position position="238"/>
    </location>
    <ligand>
        <name>Mn(2+)</name>
        <dbReference type="ChEBI" id="CHEBI:29035"/>
        <label>2</label>
    </ligand>
</feature>
<feature type="modified residue" description="N-acetylalanine" evidence="19 20 21">
    <location>
        <position position="2"/>
    </location>
</feature>
<feature type="modified residue" description="Leucine methyl ester" evidence="17">
    <location>
        <position position="307"/>
    </location>
</feature>
<feature type="mutagenesis site" description="Diminishes interaction with PPP4R4." evidence="14">
    <original>E</original>
    <variation>K</variation>
    <location>
        <position position="39"/>
    </location>
</feature>
<feature type="mutagenesis site" description="Abolishes interaction with PPP4R4." evidence="14">
    <original>E</original>
    <variation>K</variation>
    <location>
        <position position="64"/>
    </location>
</feature>
<feature type="mutagenesis site" description="Diminishes interaction with PPP4R4." evidence="14">
    <original>N</original>
    <variation>D</variation>
    <location>
        <position position="76"/>
    </location>
</feature>
<feature type="mutagenesis site" description="Loss of activity." evidence="16">
    <original>D</original>
    <variation>A</variation>
    <location>
        <position position="82"/>
    </location>
</feature>
<feature type="mutagenesis site" description="Diminishes interaction with PPP4R4." evidence="14">
    <original>R</original>
    <variation>E</variation>
    <location>
        <position position="107"/>
    </location>
</feature>
<feature type="mutagenesis site" description="Abolishes interaction with PPP4R4; no effect on interaction with PPP4R1 and PPP4R2." evidence="14">
    <original>E</original>
    <variation>K</variation>
    <location>
        <position position="277"/>
    </location>
</feature>
<feature type="mutagenesis site" description="Unable to dephosphorylate 53BP1 and KAR1, loss of DSB repair activity." evidence="17">
    <original>L</original>
    <variation>A</variation>
    <location>
        <position position="307"/>
    </location>
</feature>
<accession>P60510</accession>
<accession>P33172</accession>
<dbReference type="EC" id="3.1.3.16" evidence="11 13 15 16"/>
<dbReference type="EMBL" id="X70218">
    <property type="protein sequence ID" value="CAA49753.1"/>
    <property type="molecule type" value="mRNA"/>
</dbReference>
<dbReference type="EMBL" id="AF097996">
    <property type="protein sequence ID" value="AAC96318.1"/>
    <property type="molecule type" value="mRNA"/>
</dbReference>
<dbReference type="EMBL" id="BC001416">
    <property type="protein sequence ID" value="AAH01416.1"/>
    <property type="molecule type" value="mRNA"/>
</dbReference>
<dbReference type="CCDS" id="CCDS10669.1"/>
<dbReference type="PIR" id="S28173">
    <property type="entry name" value="S28173"/>
</dbReference>
<dbReference type="RefSeq" id="NP_001290432.1">
    <property type="nucleotide sequence ID" value="NM_001303503.2"/>
</dbReference>
<dbReference type="RefSeq" id="NP_001290433.1">
    <property type="nucleotide sequence ID" value="NM_001303504.1"/>
</dbReference>
<dbReference type="RefSeq" id="NP_001290435.1">
    <property type="nucleotide sequence ID" value="NM_001303506.1"/>
</dbReference>
<dbReference type="RefSeq" id="NP_001290436.1">
    <property type="nucleotide sequence ID" value="NM_001303507.1"/>
</dbReference>
<dbReference type="RefSeq" id="NP_002711.1">
    <property type="nucleotide sequence ID" value="NM_002720.3"/>
</dbReference>
<dbReference type="SMR" id="P60510"/>
<dbReference type="BioGRID" id="111523">
    <property type="interactions" value="142"/>
</dbReference>
<dbReference type="ComplexPortal" id="CPX-156">
    <property type="entry name" value="PPP4C-PPP4R2 protein phosphatase 4 complex"/>
</dbReference>
<dbReference type="ComplexPortal" id="CPX-1842">
    <property type="entry name" value="PPP4C-PPP4R1 protein phosphatase 4 complex"/>
</dbReference>
<dbReference type="ComplexPortal" id="CPX-1843">
    <property type="entry name" value="PPP4C-PPP4R2-PPP4R3A protein phosphatase 4 complex"/>
</dbReference>
<dbReference type="ComplexPortal" id="CPX-1844">
    <property type="entry name" value="PPP4C-PPP4R2-PPP4R3B protein phosphatase 4 complex"/>
</dbReference>
<dbReference type="ComplexPortal" id="CPX-1845">
    <property type="entry name" value="PPP4C-PPP4R4 protein phosphatase 4 complex"/>
</dbReference>
<dbReference type="CORUM" id="P60510"/>
<dbReference type="FunCoup" id="P60510">
    <property type="interactions" value="2887"/>
</dbReference>
<dbReference type="IntAct" id="P60510">
    <property type="interactions" value="78"/>
</dbReference>
<dbReference type="MINT" id="P60510"/>
<dbReference type="STRING" id="9606.ENSP00000279387"/>
<dbReference type="BindingDB" id="P60510"/>
<dbReference type="ChEMBL" id="CHEMBL5465552"/>
<dbReference type="DEPOD" id="PPP4C"/>
<dbReference type="GlyGen" id="P60510">
    <property type="glycosylation" value="3 sites, 1 N-linked glycan (1 site), 1 O-linked glycan (1 site)"/>
</dbReference>
<dbReference type="iPTMnet" id="P60510"/>
<dbReference type="MetOSite" id="P60510"/>
<dbReference type="PhosphoSitePlus" id="P60510"/>
<dbReference type="BioMuta" id="PPP4C"/>
<dbReference type="DMDM" id="44888846"/>
<dbReference type="jPOST" id="P60510"/>
<dbReference type="MassIVE" id="P60510"/>
<dbReference type="PaxDb" id="9606-ENSP00000279387"/>
<dbReference type="PeptideAtlas" id="P60510"/>
<dbReference type="ProteomicsDB" id="57213"/>
<dbReference type="Pumba" id="P60510"/>
<dbReference type="Antibodypedia" id="26991">
    <property type="antibodies" value="439 antibodies from 39 providers"/>
</dbReference>
<dbReference type="DNASU" id="5531"/>
<dbReference type="Ensembl" id="ENST00000279387.12">
    <property type="protein sequence ID" value="ENSP00000279387.7"/>
    <property type="gene ID" value="ENSG00000149923.14"/>
</dbReference>
<dbReference type="Ensembl" id="ENST00000561610.1">
    <property type="protein sequence ID" value="ENSP00000455995.1"/>
    <property type="gene ID" value="ENSG00000149923.14"/>
</dbReference>
<dbReference type="GeneID" id="5531"/>
<dbReference type="KEGG" id="hsa:5531"/>
<dbReference type="MANE-Select" id="ENST00000279387.12">
    <property type="protein sequence ID" value="ENSP00000279387.7"/>
    <property type="RefSeq nucleotide sequence ID" value="NM_002720.3"/>
    <property type="RefSeq protein sequence ID" value="NP_002711.1"/>
</dbReference>
<dbReference type="UCSC" id="uc002dwf.4">
    <property type="organism name" value="human"/>
</dbReference>
<dbReference type="AGR" id="HGNC:9319"/>
<dbReference type="CTD" id="5531"/>
<dbReference type="DisGeNET" id="5531"/>
<dbReference type="GeneCards" id="PPP4C"/>
<dbReference type="HGNC" id="HGNC:9319">
    <property type="gene designation" value="PPP4C"/>
</dbReference>
<dbReference type="HPA" id="ENSG00000149923">
    <property type="expression patterns" value="Low tissue specificity"/>
</dbReference>
<dbReference type="MIM" id="602035">
    <property type="type" value="gene"/>
</dbReference>
<dbReference type="neXtProt" id="NX_P60510"/>
<dbReference type="OpenTargets" id="ENSG00000149923"/>
<dbReference type="PharmGKB" id="PA33683"/>
<dbReference type="VEuPathDB" id="HostDB:ENSG00000149923"/>
<dbReference type="eggNOG" id="KOG0372">
    <property type="taxonomic scope" value="Eukaryota"/>
</dbReference>
<dbReference type="GeneTree" id="ENSGT00930000151040"/>
<dbReference type="HOGENOM" id="CLU_004962_8_1_1"/>
<dbReference type="InParanoid" id="P60510"/>
<dbReference type="OMA" id="QSTMPID"/>
<dbReference type="OrthoDB" id="1930084at2759"/>
<dbReference type="PAN-GO" id="P60510">
    <property type="GO annotations" value="4 GO annotations based on evolutionary models"/>
</dbReference>
<dbReference type="PhylomeDB" id="P60510"/>
<dbReference type="TreeFam" id="TF105559"/>
<dbReference type="PathwayCommons" id="P60510"/>
<dbReference type="Reactome" id="R-HSA-5693607">
    <property type="pathway name" value="Processing of DNA double-strand break ends"/>
</dbReference>
<dbReference type="SignaLink" id="P60510"/>
<dbReference type="SIGNOR" id="P60510"/>
<dbReference type="BioGRID-ORCS" id="5531">
    <property type="hits" value="801 hits in 1195 CRISPR screens"/>
</dbReference>
<dbReference type="CD-CODE" id="8C2F96ED">
    <property type="entry name" value="Centrosome"/>
</dbReference>
<dbReference type="CD-CODE" id="DEE660B4">
    <property type="entry name" value="Stress granule"/>
</dbReference>
<dbReference type="ChiTaRS" id="PPP4C">
    <property type="organism name" value="human"/>
</dbReference>
<dbReference type="GeneWiki" id="PPP4C"/>
<dbReference type="GenomeRNAi" id="5531"/>
<dbReference type="Pharos" id="P60510">
    <property type="development level" value="Tbio"/>
</dbReference>
<dbReference type="PRO" id="PR:P60510"/>
<dbReference type="Proteomes" id="UP000005640">
    <property type="component" value="Chromosome 16"/>
</dbReference>
<dbReference type="RNAct" id="P60510">
    <property type="molecule type" value="protein"/>
</dbReference>
<dbReference type="Bgee" id="ENSG00000149923">
    <property type="expression patterns" value="Expressed in lower esophagus mucosa and 202 other cell types or tissues"/>
</dbReference>
<dbReference type="ExpressionAtlas" id="P60510">
    <property type="expression patterns" value="baseline and differential"/>
</dbReference>
<dbReference type="GO" id="GO:0005813">
    <property type="term" value="C:centrosome"/>
    <property type="evidence" value="ECO:0007669"/>
    <property type="project" value="UniProtKB-SubCell"/>
</dbReference>
<dbReference type="GO" id="GO:0000785">
    <property type="term" value="C:chromatin"/>
    <property type="evidence" value="ECO:0000314"/>
    <property type="project" value="ComplexPortal"/>
</dbReference>
<dbReference type="GO" id="GO:0005737">
    <property type="term" value="C:cytoplasm"/>
    <property type="evidence" value="ECO:0000318"/>
    <property type="project" value="GO_Central"/>
</dbReference>
<dbReference type="GO" id="GO:0005829">
    <property type="term" value="C:cytosol"/>
    <property type="evidence" value="ECO:0000314"/>
    <property type="project" value="HPA"/>
</dbReference>
<dbReference type="GO" id="GO:0005654">
    <property type="term" value="C:nucleoplasm"/>
    <property type="evidence" value="ECO:0000314"/>
    <property type="project" value="HPA"/>
</dbReference>
<dbReference type="GO" id="GO:0005634">
    <property type="term" value="C:nucleus"/>
    <property type="evidence" value="ECO:0000318"/>
    <property type="project" value="GO_Central"/>
</dbReference>
<dbReference type="GO" id="GO:0005886">
    <property type="term" value="C:plasma membrane"/>
    <property type="evidence" value="ECO:0000314"/>
    <property type="project" value="HPA"/>
</dbReference>
<dbReference type="GO" id="GO:0030289">
    <property type="term" value="C:protein phosphatase 4 complex"/>
    <property type="evidence" value="ECO:0000353"/>
    <property type="project" value="ComplexPortal"/>
</dbReference>
<dbReference type="GO" id="GO:0046872">
    <property type="term" value="F:metal ion binding"/>
    <property type="evidence" value="ECO:0007669"/>
    <property type="project" value="UniProtKB-KW"/>
</dbReference>
<dbReference type="GO" id="GO:0004722">
    <property type="term" value="F:protein serine/threonine phosphatase activity"/>
    <property type="evidence" value="ECO:0000314"/>
    <property type="project" value="UniProtKB"/>
</dbReference>
<dbReference type="GO" id="GO:0000724">
    <property type="term" value="P:double-strand break repair via homologous recombination"/>
    <property type="evidence" value="ECO:0000318"/>
    <property type="project" value="GO_Central"/>
</dbReference>
<dbReference type="GO" id="GO:2000779">
    <property type="term" value="P:regulation of double-strand break repair"/>
    <property type="evidence" value="ECO:0000315"/>
    <property type="project" value="ComplexPortal"/>
</dbReference>
<dbReference type="GO" id="GO:0010569">
    <property type="term" value="P:regulation of double-strand break repair via homologous recombination"/>
    <property type="evidence" value="ECO:0000315"/>
    <property type="project" value="UniProtKB"/>
</dbReference>
<dbReference type="CDD" id="cd07415">
    <property type="entry name" value="MPP_PP2A_PP4_PP6"/>
    <property type="match status" value="1"/>
</dbReference>
<dbReference type="FunFam" id="3.60.21.10:FF:000010">
    <property type="entry name" value="Serine/threonine-protein phosphatase"/>
    <property type="match status" value="1"/>
</dbReference>
<dbReference type="Gene3D" id="3.60.21.10">
    <property type="match status" value="1"/>
</dbReference>
<dbReference type="InterPro" id="IPR004843">
    <property type="entry name" value="Calcineurin-like_PHP_ApaH"/>
</dbReference>
<dbReference type="InterPro" id="IPR029052">
    <property type="entry name" value="Metallo-depent_PP-like"/>
</dbReference>
<dbReference type="InterPro" id="IPR047129">
    <property type="entry name" value="PPA2-like"/>
</dbReference>
<dbReference type="InterPro" id="IPR006186">
    <property type="entry name" value="Ser/Thr-sp_prot-phosphatase"/>
</dbReference>
<dbReference type="PANTHER" id="PTHR45619">
    <property type="entry name" value="SERINE/THREONINE-PROTEIN PHOSPHATASE PP2A-RELATED"/>
    <property type="match status" value="1"/>
</dbReference>
<dbReference type="Pfam" id="PF00149">
    <property type="entry name" value="Metallophos"/>
    <property type="match status" value="1"/>
</dbReference>
<dbReference type="PRINTS" id="PR00114">
    <property type="entry name" value="STPHPHTASE"/>
</dbReference>
<dbReference type="SMART" id="SM00156">
    <property type="entry name" value="PP2Ac"/>
    <property type="match status" value="1"/>
</dbReference>
<dbReference type="SUPFAM" id="SSF56300">
    <property type="entry name" value="Metallo-dependent phosphatases"/>
    <property type="match status" value="1"/>
</dbReference>
<dbReference type="PROSITE" id="PS00125">
    <property type="entry name" value="SER_THR_PHOSPHATASE"/>
    <property type="match status" value="1"/>
</dbReference>
<proteinExistence type="evidence at protein level"/>
<protein>
    <recommendedName>
        <fullName>Serine/threonine-protein phosphatase 4 catalytic subunit</fullName>
        <shortName>PP4C</shortName>
        <shortName>Pp4</shortName>
        <ecNumber evidence="11 13 15 16">3.1.3.16</ecNumber>
    </recommendedName>
    <alternativeName>
        <fullName>Protein phosphatase X</fullName>
        <shortName>PP-X</shortName>
    </alternativeName>
</protein>
<evidence type="ECO:0000250" key="1"/>
<evidence type="ECO:0000250" key="2">
    <source>
        <dbReference type="UniProtKB" id="P36873"/>
    </source>
</evidence>
<evidence type="ECO:0000250" key="3">
    <source>
        <dbReference type="UniProtKB" id="P67775"/>
    </source>
</evidence>
<evidence type="ECO:0000269" key="4">
    <source>
    </source>
</evidence>
<evidence type="ECO:0000269" key="5">
    <source>
    </source>
</evidence>
<evidence type="ECO:0000269" key="6">
    <source>
    </source>
</evidence>
<evidence type="ECO:0000269" key="7">
    <source>
    </source>
</evidence>
<evidence type="ECO:0000269" key="8">
    <source>
    </source>
</evidence>
<evidence type="ECO:0000269" key="9">
    <source>
    </source>
</evidence>
<evidence type="ECO:0000269" key="10">
    <source>
    </source>
</evidence>
<evidence type="ECO:0000269" key="11">
    <source>
    </source>
</evidence>
<evidence type="ECO:0000269" key="12">
    <source>
    </source>
</evidence>
<evidence type="ECO:0000269" key="13">
    <source>
    </source>
</evidence>
<evidence type="ECO:0000269" key="14">
    <source>
    </source>
</evidence>
<evidence type="ECO:0000269" key="15">
    <source>
    </source>
</evidence>
<evidence type="ECO:0000269" key="16">
    <source>
    </source>
</evidence>
<evidence type="ECO:0000269" key="17">
    <source>
    </source>
</evidence>
<evidence type="ECO:0000305" key="18"/>
<evidence type="ECO:0007744" key="19">
    <source>
    </source>
</evidence>
<evidence type="ECO:0007744" key="20">
    <source>
    </source>
</evidence>
<evidence type="ECO:0007744" key="21">
    <source>
    </source>
</evidence>
<reference key="1">
    <citation type="journal article" date="1992" name="Biochim. Biophys. Acta">
        <title>Protein phosphatase X has been highly conserved during mammalian evolution.</title>
        <authorList>
            <person name="Brewis N.D."/>
            <person name="Cohen P.T.W."/>
        </authorList>
    </citation>
    <scope>NUCLEOTIDE SEQUENCE [MRNA]</scope>
    <scope>INTERACTION WITH REL; NFKB1 AND RELA</scope>
    <scope>FUNCTION</scope>
</reference>
<reference key="2">
    <citation type="submission" date="1998-12" db="EMBL/GenBank/DDBJ databases">
        <authorList>
            <person name="Cohen P.T.W."/>
        </authorList>
    </citation>
    <scope>SEQUENCE REVISION TO 75</scope>
</reference>
<reference key="3">
    <citation type="journal article" date="1998" name="J. Biol. Chem.">
        <title>Protein phosphatase X interacts with c-Rel and stimulates c-Rel/nuclear factor kappaB activity.</title>
        <authorList>
            <person name="Hu M.C.-T."/>
            <person name="Tang-Oxley Q."/>
            <person name="Qiu W.R."/>
            <person name="Wang Y.-P."/>
            <person name="Mihindukulasuriya K.A."/>
            <person name="Afshar R."/>
            <person name="Tan T.-H."/>
        </authorList>
    </citation>
    <scope>NUCLEOTIDE SEQUENCE [MRNA]</scope>
</reference>
<reference key="4">
    <citation type="journal article" date="2004" name="Genome Res.">
        <title>The status, quality, and expansion of the NIH full-length cDNA project: the Mammalian Gene Collection (MGC).</title>
        <authorList>
            <consortium name="The MGC Project Team"/>
        </authorList>
    </citation>
    <scope>NUCLEOTIDE SEQUENCE [LARGE SCALE MRNA]</scope>
    <source>
        <tissue>Placenta</tissue>
    </source>
</reference>
<reference key="5">
    <citation type="journal article" date="2002" name="J. Biol. Chem.">
        <title>Protein phosphatase 4 is involved in tumor necrosis factor-alpha-induced activation of c-Jun N-terminal kinase.</title>
        <authorList>
            <person name="Zhou G."/>
            <person name="Mihindukulasuriya K.A."/>
            <person name="MacCorkle-Chosnek R.A."/>
            <person name="Van Hooser A."/>
            <person name="Hu M.C."/>
            <person name="Brinkley B.R."/>
            <person name="Tan T.H."/>
        </authorList>
    </citation>
    <scope>FUNCTION</scope>
</reference>
<reference key="6">
    <citation type="journal article" date="2003" name="Cell Death Differ.">
        <title>Functional expression cloning reveals proapoptotic role for protein phosphatase 4.</title>
        <authorList>
            <person name="Mourtada-Maarabouni M."/>
            <person name="Kirkham L."/>
            <person name="Jenkins B."/>
            <person name="Rayner J."/>
            <person name="Gonda T.J."/>
            <person name="Starr R."/>
            <person name="Trayner I."/>
            <person name="Farzaneh F."/>
            <person name="Williams G.T."/>
        </authorList>
    </citation>
    <scope>FUNCTION</scope>
</reference>
<reference key="7">
    <citation type="journal article" date="2003" name="J. Cell Sci.">
        <title>Protein phosphatase 4 interacts with the survival of motor neurons complex and enhances the temporal localisation of snRNPs.</title>
        <authorList>
            <person name="Carnegie G.K."/>
            <person name="Sleeman J.E."/>
            <person name="Morrice N."/>
            <person name="Hastie C.J."/>
            <person name="Peggie M.W."/>
            <person name="Philp A."/>
            <person name="Lamond A.I."/>
            <person name="Cohen P.T.W."/>
        </authorList>
    </citation>
    <scope>FUNCTION</scope>
    <scope>INTERACTION WITH PPP4R2; SMN1 AND GEMIN4</scope>
    <scope>COMPOSITION OF THE PPP4C-PPP4R2 COMPLEX</scope>
</reference>
<reference key="8">
    <citation type="journal article" date="2004" name="J. Biol. Chem.">
        <title>Protein phosphatase 4 interacts with and down-regulates insulin receptor substrate 4 following tumor necrosis factor-alpha stimulation.</title>
        <authorList>
            <person name="Mihindukulasuriya K.A."/>
            <person name="Zhou G."/>
            <person name="Qin J."/>
            <person name="Tan T.-H."/>
        </authorList>
    </citation>
    <scope>INTERACTION WITH IRS4</scope>
</reference>
<reference key="9">
    <citation type="journal article" date="2005" name="Genes Dev.">
        <title>Histone deacetylase 3 (HDAC3) activity is regulated by interaction with protein serine/threonine phosphatase 4.</title>
        <authorList>
            <person name="Zhang X."/>
            <person name="Ozawa Y."/>
            <person name="Lee H."/>
            <person name="Wen Y.D."/>
            <person name="Tan T.H."/>
            <person name="Wadzinski B.E."/>
            <person name="Seto E."/>
        </authorList>
    </citation>
    <scope>INTERACTION WITH HDAC3</scope>
    <scope>FUNCTION OF THE PPP4C-PPP4R1 COMPLEX</scope>
</reference>
<reference key="10">
    <citation type="journal article" date="2005" name="Mol. Cell. Proteomics">
        <title>A novel, evolutionarily conserved protein phosphatase complex involved in cisplatin sensitivity.</title>
        <authorList>
            <person name="Gingras A.-C."/>
            <person name="Caballero M."/>
            <person name="Zarske M."/>
            <person name="Sanchez A."/>
            <person name="Hazbun T.R."/>
            <person name="Fields S."/>
            <person name="Sonenberg N."/>
            <person name="Hafen E."/>
            <person name="Raught B."/>
            <person name="Aebersold R."/>
        </authorList>
    </citation>
    <scope>IDENTIFICATION IN THE PPP4C-PPP4R2-PPP4R3A COMPLEX</scope>
    <scope>INTERACTION WITH SMEK1</scope>
    <scope>IDENTIFICATION BY MASS SPECTROMETRY</scope>
</reference>
<reference key="11">
    <citation type="journal article" date="2008" name="EMBO Rep.">
        <title>PP4 is a gammaH2AX phosphatase required for recovery from the DNA damage checkpoint.</title>
        <authorList>
            <person name="Nakada S."/>
            <person name="Chen G.I."/>
            <person name="Gingras A.C."/>
            <person name="Durocher D."/>
        </authorList>
    </citation>
    <scope>FUNCTION</scope>
    <scope>CATALYTIC ACTIVITY</scope>
</reference>
<reference key="12">
    <citation type="journal article" date="2008" name="Int. J. Biochem. Cell Biol.">
        <title>Depletion of protein phosphatase 4 in human cells reveals essential roles in centrosome maturation, cell migration and the regulation of Rho GTPases.</title>
        <authorList>
            <person name="Martin-Granados C."/>
            <person name="Philp A."/>
            <person name="Oxenham S.K."/>
            <person name="Prescott A.R."/>
            <person name="Cohen P.T.W."/>
        </authorList>
    </citation>
    <scope>FUNCTION</scope>
</reference>
<reference key="13">
    <citation type="journal article" date="2008" name="J. Biol. Chem.">
        <title>PP4R4/KIAA1622 forms a novel stable cytosolic complex with phosphoprotein phosphatase 4.</title>
        <authorList>
            <person name="Chen G.I."/>
            <person name="Tisayakorn S."/>
            <person name="Jorgensen C."/>
            <person name="D'Ambrosio L.M."/>
            <person name="Goudreault M."/>
            <person name="Gingras A.-C."/>
        </authorList>
    </citation>
    <scope>INTERACTION WITH PPP4R4</scope>
    <scope>IDENTIFICATION IN THE PPP4C-PPP4R4 COMPLEX</scope>
    <scope>MUTAGENESIS OF GLU-39; GLU-64; ASN-76; ARG-107 AND GLU-277</scope>
</reference>
<reference key="14">
    <citation type="journal article" date="2008" name="J. Cell Biol.">
        <title>Protein phosphatase 4 catalytic subunit regulates Cdk1 activity and microtubule organization via NDEL1 dephosphorylation.</title>
        <authorList>
            <person name="Toyo-oka K."/>
            <person name="Mori D."/>
            <person name="Yano Y."/>
            <person name="Shiota M."/>
            <person name="Iwao H."/>
            <person name="Goto H."/>
            <person name="Inagaki M."/>
            <person name="Hiraiwa N."/>
            <person name="Muramatsu M."/>
            <person name="Wynshaw-Boris A."/>
            <person name="Yoshiki A."/>
            <person name="Hirotsune S."/>
        </authorList>
    </citation>
    <scope>FUNCTION</scope>
    <scope>CATALYTIC ACTIVITY</scope>
</reference>
<reference key="15">
    <citation type="journal article" date="2008" name="Mol. Cell">
        <title>A PP4-phosphatase complex dephosphorylates gamma-H2AX generated during DNA replication.</title>
        <authorList>
            <person name="Chowdhury D."/>
            <person name="Xu X."/>
            <person name="Zhong X."/>
            <person name="Ahmed F."/>
            <person name="Zhong J."/>
            <person name="Liao J."/>
            <person name="Dykxhoorn D.M."/>
            <person name="Weinstock D.M."/>
            <person name="Pfeifer G.P."/>
            <person name="Lieberman J."/>
        </authorList>
    </citation>
    <scope>FUNCTION OF THE PPP4C-PPP4R2-PPP4R3A COMPLEX</scope>
    <scope>CATALYTIC ACTIVITY</scope>
    <scope>IDENTIFICATION IN THE PPP4C-PPP4R1 COMPLEX</scope>
    <scope>IDENTIFICATION IN THE PPP4C-PPP4R2-PPP4R3A COMPLEX</scope>
    <scope>IDENTIFICATION IN THE PPP4C-PPP4R2-PPP4R3B COMPLEX</scope>
</reference>
<reference key="16">
    <citation type="journal article" date="2009" name="Anal. Chem.">
        <title>Lys-N and trypsin cover complementary parts of the phosphoproteome in a refined SCX-based approach.</title>
        <authorList>
            <person name="Gauci S."/>
            <person name="Helbig A.O."/>
            <person name="Slijper M."/>
            <person name="Krijgsveld J."/>
            <person name="Heck A.J."/>
            <person name="Mohammed S."/>
        </authorList>
    </citation>
    <scope>ACETYLATION [LARGE SCALE ANALYSIS] AT ALA-2</scope>
    <scope>CLEAVAGE OF INITIATOR METHIONINE [LARGE SCALE ANALYSIS]</scope>
    <scope>IDENTIFICATION BY MASS SPECTROMETRY [LARGE SCALE ANALYSIS]</scope>
</reference>
<reference key="17">
    <citation type="journal article" date="2010" name="Nat. Struct. Mol. Biol.">
        <title>A PP4 phosphatase complex dephosphorylates RPA2 to facilitate DNA repair via homologous recombination.</title>
        <authorList>
            <person name="Lee D.H."/>
            <person name="Pan Y."/>
            <person name="Kanner S."/>
            <person name="Sung P."/>
            <person name="Borowiec J.A."/>
            <person name="Chowdhury D."/>
        </authorList>
    </citation>
    <scope>FUNCTION</scope>
    <scope>CATALYTIC ACTIVITY</scope>
    <scope>MUTAGENESIS OF ASP-82</scope>
</reference>
<reference key="18">
    <citation type="journal article" date="2011" name="BMC Syst. Biol.">
        <title>Initial characterization of the human central proteome.</title>
        <authorList>
            <person name="Burkard T.R."/>
            <person name="Planyavsky M."/>
            <person name="Kaupe I."/>
            <person name="Breitwieser F.P."/>
            <person name="Buerckstuemmer T."/>
            <person name="Bennett K.L."/>
            <person name="Superti-Furga G."/>
            <person name="Colinge J."/>
        </authorList>
    </citation>
    <scope>IDENTIFICATION BY MASS SPECTROMETRY [LARGE SCALE ANALYSIS]</scope>
</reference>
<reference key="19">
    <citation type="journal article" date="2012" name="Mol. Cell. Proteomics">
        <title>Comparative large-scale characterisation of plant vs. mammal proteins reveals similar and idiosyncratic N-alpha acetylation features.</title>
        <authorList>
            <person name="Bienvenut W.V."/>
            <person name="Sumpton D."/>
            <person name="Martinez A."/>
            <person name="Lilla S."/>
            <person name="Espagne C."/>
            <person name="Meinnel T."/>
            <person name="Giglione C."/>
        </authorList>
    </citation>
    <scope>ACETYLATION [LARGE SCALE ANALYSIS] AT ALA-2</scope>
    <scope>CLEAVAGE OF INITIATOR METHIONINE [LARGE SCALE ANALYSIS]</scope>
    <scope>IDENTIFICATION BY MASS SPECTROMETRY [LARGE SCALE ANALYSIS]</scope>
</reference>
<reference key="20">
    <citation type="journal article" date="2012" name="Proc. Natl. Acad. Sci. U.S.A.">
        <title>N-terminal acetylome analyses and functional insights of the N-terminal acetyltransferase NatB.</title>
        <authorList>
            <person name="Van Damme P."/>
            <person name="Lasa M."/>
            <person name="Polevoda B."/>
            <person name="Gazquez C."/>
            <person name="Elosegui-Artola A."/>
            <person name="Kim D.S."/>
            <person name="De Juan-Pardo E."/>
            <person name="Demeyer K."/>
            <person name="Hole K."/>
            <person name="Larrea E."/>
            <person name="Timmerman E."/>
            <person name="Prieto J."/>
            <person name="Arnesen T."/>
            <person name="Sherman F."/>
            <person name="Gevaert K."/>
            <person name="Aldabe R."/>
        </authorList>
    </citation>
    <scope>ACETYLATION [LARGE SCALE ANALYSIS] AT ALA-2</scope>
    <scope>CLEAVAGE OF INITIATOR METHIONINE [LARGE SCALE ANALYSIS]</scope>
    <scope>IDENTIFICATION BY MASS SPECTROMETRY [LARGE SCALE ANALYSIS]</scope>
</reference>
<reference key="21">
    <citation type="journal article" date="2014" name="Biochem. Biophys. Res. Commun.">
        <title>Leucine methylation of protein phosphatase PP4C at C-terminal is critical for its cellular functions.</title>
        <authorList>
            <person name="Lee J."/>
            <person name="Lee D.H."/>
        </authorList>
    </citation>
    <scope>METHYLATION AT LEU-307</scope>
    <scope>MUTAGENESIS OF LEU-307</scope>
</reference>
<gene>
    <name type="primary">PPP4C</name>
    <name type="synonym">PPP4</name>
    <name type="synonym">PPX</name>
</gene>
<keyword id="KW-0007">Acetylation</keyword>
<keyword id="KW-0963">Cytoplasm</keyword>
<keyword id="KW-0206">Cytoskeleton</keyword>
<keyword id="KW-0378">Hydrolase</keyword>
<keyword id="KW-0464">Manganese</keyword>
<keyword id="KW-0479">Metal-binding</keyword>
<keyword id="KW-0488">Methylation</keyword>
<keyword id="KW-0539">Nucleus</keyword>
<keyword id="KW-0904">Protein phosphatase</keyword>
<keyword id="KW-1267">Proteomics identification</keyword>
<keyword id="KW-1185">Reference proteome</keyword>
<comment type="function">
    <text evidence="1 4 5 6 7 9 11 12 13 15 16">Protein phosphatase that is involved in many processes such as microtubule organization at centrosomes, maturation of spliceosomal snRNPs, apoptosis, DNA repair, tumor necrosis factor (TNF)-alpha signaling, activation of c-Jun N-terminal kinase MAPK8, regulation of histone acetylation, DNA damage checkpoint signaling, NF-kappa-B activation and cell migration. The PPP4C-PPP4R1 PP4 complex may play a role in dephosphorylation and regulation of HDAC3. The PPP4C-PPP4R2-PPP4R3A PP4 complex specifically dephosphorylates H2AX phosphorylated on Ser-140 (gamma-H2AX) generated during DNA replication and required for DNA double strand break repair. Dephosphorylates NDEL1 at CDK1 phosphorylation sites and negatively regulates CDK1 activity in interphase (By similarity). In response to DNA damage, catalyzes RPA2 dephosphorylation, an essential step for DNA repair since it allows the efficient RPA2-mediated recruitment of RAD51 to chromatin.</text>
</comment>
<comment type="catalytic activity">
    <reaction evidence="11 13 15 16">
        <text>O-phospho-L-seryl-[protein] + H2O = L-seryl-[protein] + phosphate</text>
        <dbReference type="Rhea" id="RHEA:20629"/>
        <dbReference type="Rhea" id="RHEA-COMP:9863"/>
        <dbReference type="Rhea" id="RHEA-COMP:11604"/>
        <dbReference type="ChEBI" id="CHEBI:15377"/>
        <dbReference type="ChEBI" id="CHEBI:29999"/>
        <dbReference type="ChEBI" id="CHEBI:43474"/>
        <dbReference type="ChEBI" id="CHEBI:83421"/>
        <dbReference type="EC" id="3.1.3.16"/>
    </reaction>
</comment>
<comment type="catalytic activity">
    <reaction evidence="11 13 15 16">
        <text>O-phospho-L-threonyl-[protein] + H2O = L-threonyl-[protein] + phosphate</text>
        <dbReference type="Rhea" id="RHEA:47004"/>
        <dbReference type="Rhea" id="RHEA-COMP:11060"/>
        <dbReference type="Rhea" id="RHEA-COMP:11605"/>
        <dbReference type="ChEBI" id="CHEBI:15377"/>
        <dbReference type="ChEBI" id="CHEBI:30013"/>
        <dbReference type="ChEBI" id="CHEBI:43474"/>
        <dbReference type="ChEBI" id="CHEBI:61977"/>
        <dbReference type="EC" id="3.1.3.16"/>
    </reaction>
</comment>
<comment type="cofactor">
    <cofactor evidence="3">
        <name>Mn(2+)</name>
        <dbReference type="ChEBI" id="CHEBI:29035"/>
    </cofactor>
    <text evidence="3">Binds 2 manganese ions per subunit.</text>
</comment>
<comment type="subunit">
    <text evidence="5 7 8 9 10 13 14">Serine/threonine-protein phosphatase 4 (PP4) occurs in different assemblies of the catalytic and one or more regulatory subunits (PubMed:12668731, PubMed:16085932, PubMed:18614045, PubMed:18715871). Component of the PP4 complexes PPP4C-PPP4R1, PPP4C-PPP4R2, PPP4C-PPP4R2-PPP4R3A, PPP4C-PPP4R2-PPP4R3B and PPP4C-PPP4R4 (PubMed:12668731, PubMed:16085932, PubMed:18614045, PubMed:18715871). The PPP4C-PPP4R2 complex appears to be a tetramer composed of 2 molecules of PPP4C and 2 molecules of PPP4R2 (PubMed:12668731). Interacts with REL, NFKB1/p50 and RELA (PubMed:1336397). Interacts with SMN1 and GEMIN4 (PubMed:12668731). Interacts with IRS4 (phosphorylated) (PubMed:15331607). Interacts with SMEK1/PPP4R3A; the interaction requires PP4R2 (PubMed:16085932). Interacts with HDAC3 (PubMed:15805470).</text>
</comment>
<comment type="interaction">
    <interactant intactId="EBI-1046072">
        <id>P60510</id>
    </interactant>
    <interactant intactId="EBI-751540">
        <id>O95872</id>
        <label>GPANK1</label>
    </interactant>
    <organismsDiffer>false</organismsDiffer>
    <experiments>3</experiments>
</comment>
<comment type="interaction">
    <interactant intactId="EBI-1046072">
        <id>P60510</id>
    </interactant>
    <interactant intactId="EBI-607682">
        <id>O15379</id>
        <label>HDAC3</label>
    </interactant>
    <organismsDiffer>false</organismsDiffer>
    <experiments>2</experiments>
</comment>
<comment type="interaction">
    <interactant intactId="EBI-1046072">
        <id>P60510</id>
    </interactant>
    <interactant intactId="EBI-1055954">
        <id>P78318</id>
        <label>IGBP1</label>
    </interactant>
    <organismsDiffer>false</organismsDiffer>
    <experiments>17</experiments>
</comment>
<comment type="interaction">
    <interactant intactId="EBI-1046072">
        <id>P60510</id>
    </interactant>
    <interactant intactId="EBI-302388">
        <id>P30153</id>
        <label>PPP2R1A</label>
    </interactant>
    <organismsDiffer>false</organismsDiffer>
    <experiments>8</experiments>
</comment>
<comment type="interaction">
    <interactant intactId="EBI-1046072">
        <id>P60510</id>
    </interactant>
    <interactant intactId="EBI-1056262">
        <id>Q8TF05</id>
        <label>PPP4R1</label>
    </interactant>
    <organismsDiffer>false</organismsDiffer>
    <experiments>10</experiments>
</comment>
<comment type="interaction">
    <interactant intactId="EBI-1046072">
        <id>P60510</id>
    </interactant>
    <interactant intactId="EBI-1048740">
        <id>Q9NY27</id>
        <label>PPP4R2</label>
    </interactant>
    <organismsDiffer>false</organismsDiffer>
    <experiments>16</experiments>
</comment>
<comment type="interaction">
    <interactant intactId="EBI-1046072">
        <id>P60510</id>
    </interactant>
    <interactant intactId="EBI-1774189">
        <id>Q6NUP7</id>
        <label>PPP4R4</label>
    </interactant>
    <organismsDiffer>false</organismsDiffer>
    <experiments>10</experiments>
</comment>
<comment type="interaction">
    <interactant intactId="EBI-1046072">
        <id>P60510</id>
    </interactant>
    <interactant intactId="EBI-1774121">
        <id>Q15257</id>
        <label>PTPA</label>
    </interactant>
    <organismsDiffer>false</organismsDiffer>
    <experiments>2</experiments>
</comment>
<comment type="interaction">
    <interactant intactId="EBI-1046072">
        <id>P60510</id>
    </interactant>
    <interactant intactId="EBI-1054735">
        <id>O75663</id>
        <label>TIPRL</label>
    </interactant>
    <organismsDiffer>false</organismsDiffer>
    <experiments>5</experiments>
</comment>
<comment type="subcellular location">
    <subcellularLocation>
        <location>Cytoplasm</location>
    </subcellularLocation>
    <subcellularLocation>
        <location>Nucleus</location>
    </subcellularLocation>
    <subcellularLocation>
        <location>Cytoplasm</location>
        <location>Cytoskeleton</location>
        <location>Microtubule organizing center</location>
        <location>Centrosome</location>
    </subcellularLocation>
</comment>
<comment type="PTM">
    <text evidence="17">Methylation at the C-terminal Leu-307 is critical for interactions with regulatory subunits and functions in DNA repair.</text>
</comment>
<comment type="similarity">
    <text evidence="18">Belongs to the PPP phosphatase family. PP-4 (PP-X) subfamily.</text>
</comment>